<gene>
    <name evidence="1" type="primary">cops9</name>
    <name type="synonym">myeov2</name>
    <name type="ORF">zgc:77808</name>
</gene>
<protein>
    <recommendedName>
        <fullName evidence="2">COP9 signalosome complex subunit 9</fullName>
    </recommendedName>
</protein>
<sequence>MKPAVDEMFPEGAGPYVDLDEAGGSSGLLMDLAANEKAVHSDFFNDFEDLFDDDDIQ</sequence>
<keyword id="KW-0963">Cytoplasm</keyword>
<keyword id="KW-0539">Nucleus</keyword>
<keyword id="KW-1185">Reference proteome</keyword>
<keyword id="KW-0736">Signalosome</keyword>
<organism>
    <name type="scientific">Danio rerio</name>
    <name type="common">Zebrafish</name>
    <name type="synonym">Brachydanio rerio</name>
    <dbReference type="NCBI Taxonomy" id="7955"/>
    <lineage>
        <taxon>Eukaryota</taxon>
        <taxon>Metazoa</taxon>
        <taxon>Chordata</taxon>
        <taxon>Craniata</taxon>
        <taxon>Vertebrata</taxon>
        <taxon>Euteleostomi</taxon>
        <taxon>Actinopterygii</taxon>
        <taxon>Neopterygii</taxon>
        <taxon>Teleostei</taxon>
        <taxon>Ostariophysi</taxon>
        <taxon>Cypriniformes</taxon>
        <taxon>Danionidae</taxon>
        <taxon>Danioninae</taxon>
        <taxon>Danio</taxon>
    </lineage>
</organism>
<comment type="function">
    <text evidence="1">Component of the COP9 signalosome complex (CSN), a complex involved in various cellular and developmental processes. The CSN complex is an essential regulator of the ubiquitin (Ubl) conjugation pathway by mediating the deneddylation of the cullin subunits of SCF-type E3 ligase complexes, leading to decrease the Ubl ligase activity. May play a role in cell proliferation.</text>
</comment>
<comment type="subunit">
    <text evidence="1">Component of the CSN complex, probably composed of cops1, cops2, cops3, cops4, cops5, cops6, cops7, cops8 and cops9.</text>
</comment>
<comment type="subcellular location">
    <subcellularLocation>
        <location evidence="1">Nucleus</location>
    </subcellularLocation>
    <subcellularLocation>
        <location evidence="1">Cytoplasm</location>
    </subcellularLocation>
    <subcellularLocation>
        <location evidence="1">Nucleus</location>
        <location evidence="1">Nucleoplasm</location>
    </subcellularLocation>
</comment>
<comment type="similarity">
    <text evidence="2">Belongs to the CSN9 family.</text>
</comment>
<comment type="sequence caution" evidence="2">
    <conflict type="erroneous initiation">
        <sequence resource="EMBL-CDS" id="AAH62283"/>
    </conflict>
</comment>
<feature type="chain" id="PRO_0000332926" description="COP9 signalosome complex subunit 9">
    <location>
        <begin position="1"/>
        <end position="57"/>
    </location>
</feature>
<dbReference type="EMBL" id="BC062283">
    <property type="protein sequence ID" value="AAH62283.1"/>
    <property type="status" value="ALT_INIT"/>
    <property type="molecule type" value="mRNA"/>
</dbReference>
<dbReference type="RefSeq" id="NP_957141.2">
    <property type="nucleotide sequence ID" value="NM_200847.2"/>
</dbReference>
<dbReference type="FunCoup" id="Q6P6E6">
    <property type="interactions" value="1095"/>
</dbReference>
<dbReference type="STRING" id="7955.ENSDARP00000106916"/>
<dbReference type="PaxDb" id="7955-ENSDARP00000106916"/>
<dbReference type="Ensembl" id="ENSDART00000130696">
    <property type="protein sequence ID" value="ENSDARP00000106916"/>
    <property type="gene ID" value="ENSDARG00000045296"/>
</dbReference>
<dbReference type="GeneID" id="393820"/>
<dbReference type="KEGG" id="dre:393820"/>
<dbReference type="AGR" id="ZFIN:ZDB-GENE-040426-1883"/>
<dbReference type="CTD" id="150678"/>
<dbReference type="ZFIN" id="ZDB-GENE-040426-1883">
    <property type="gene designation" value="cops9"/>
</dbReference>
<dbReference type="eggNOG" id="ENOG502S7KZ">
    <property type="taxonomic scope" value="Eukaryota"/>
</dbReference>
<dbReference type="HOGENOM" id="CLU_191079_0_0_1"/>
<dbReference type="InParanoid" id="Q6P6E6"/>
<dbReference type="OMA" id="SNDKHVH"/>
<dbReference type="OrthoDB" id="9972368at2759"/>
<dbReference type="PhylomeDB" id="Q6P6E6"/>
<dbReference type="TreeFam" id="TF323869"/>
<dbReference type="PRO" id="PR:Q6P6E6"/>
<dbReference type="Proteomes" id="UP000000437">
    <property type="component" value="Chromosome 24"/>
</dbReference>
<dbReference type="Bgee" id="ENSDARG00000045296">
    <property type="expression patterns" value="Expressed in testis and 29 other cell types or tissues"/>
</dbReference>
<dbReference type="GO" id="GO:0000785">
    <property type="term" value="C:chromatin"/>
    <property type="evidence" value="ECO:0000250"/>
    <property type="project" value="UniProtKB"/>
</dbReference>
<dbReference type="GO" id="GO:0008180">
    <property type="term" value="C:COP9 signalosome"/>
    <property type="evidence" value="ECO:0000250"/>
    <property type="project" value="UniProtKB"/>
</dbReference>
<dbReference type="GO" id="GO:0005737">
    <property type="term" value="C:cytoplasm"/>
    <property type="evidence" value="ECO:0000250"/>
    <property type="project" value="UniProtKB"/>
</dbReference>
<dbReference type="GO" id="GO:0005654">
    <property type="term" value="C:nucleoplasm"/>
    <property type="evidence" value="ECO:0000250"/>
    <property type="project" value="UniProtKB"/>
</dbReference>
<dbReference type="GO" id="GO:0005634">
    <property type="term" value="C:nucleus"/>
    <property type="evidence" value="ECO:0000250"/>
    <property type="project" value="UniProtKB"/>
</dbReference>
<dbReference type="GO" id="GO:0034644">
    <property type="term" value="P:cellular response to UV"/>
    <property type="evidence" value="ECO:0000250"/>
    <property type="project" value="UniProtKB"/>
</dbReference>
<dbReference type="GO" id="GO:0008284">
    <property type="term" value="P:positive regulation of cell population proliferation"/>
    <property type="evidence" value="ECO:0000250"/>
    <property type="project" value="UniProtKB"/>
</dbReference>
<dbReference type="InterPro" id="IPR029391">
    <property type="entry name" value="CSN9_metazoa"/>
</dbReference>
<dbReference type="PANTHER" id="PTHR28562">
    <property type="entry name" value="COP9 SIGNALOSOME COMPLEX SUBUNIT 9"/>
    <property type="match status" value="1"/>
</dbReference>
<dbReference type="Pfam" id="PF15004">
    <property type="entry name" value="MYEOV2"/>
    <property type="match status" value="1"/>
</dbReference>
<reference key="1">
    <citation type="submission" date="2003-11" db="EMBL/GenBank/DDBJ databases">
        <authorList>
            <consortium name="NIH - Zebrafish Gene Collection (ZGC) project"/>
        </authorList>
    </citation>
    <scope>NUCLEOTIDE SEQUENCE [LARGE SCALE MRNA]</scope>
</reference>
<evidence type="ECO:0000250" key="1">
    <source>
        <dbReference type="UniProtKB" id="Q8WXC6"/>
    </source>
</evidence>
<evidence type="ECO:0000305" key="2"/>
<proteinExistence type="inferred from homology"/>
<accession>Q6P6E6</accession>
<name>CSN9_DANRE</name>